<evidence type="ECO:0000250" key="1">
    <source>
        <dbReference type="UniProtKB" id="O14933"/>
    </source>
</evidence>
<evidence type="ECO:0000255" key="2">
    <source>
        <dbReference type="PROSITE-ProRule" id="PRU00388"/>
    </source>
</evidence>
<evidence type="ECO:0000255" key="3">
    <source>
        <dbReference type="PROSITE-ProRule" id="PRU10133"/>
    </source>
</evidence>
<reference key="1">
    <citation type="journal article" date="2004" name="Genome Res.">
        <title>The status, quality, and expansion of the NIH full-length cDNA project: the Mammalian Gene Collection (MGC).</title>
        <authorList>
            <consortium name="The MGC Project Team"/>
        </authorList>
    </citation>
    <scope>NUCLEOTIDE SEQUENCE [LARGE SCALE MRNA]</scope>
    <source>
        <tissue>Placenta</tissue>
    </source>
</reference>
<accession>Q4V8J2</accession>
<comment type="function">
    <text evidence="2">Catalyzes the covalent attachment of ubiquitin to other proteins. Functions in the E6/E6-AP-induced ubiquitination of p53/TP53. Promotes ubiquitination and subsequent proteasomal degradation of FLT3.</text>
</comment>
<comment type="catalytic activity">
    <reaction evidence="2 3">
        <text>S-ubiquitinyl-[E1 ubiquitin-activating enzyme]-L-cysteine + [E2 ubiquitin-conjugating enzyme]-L-cysteine = [E1 ubiquitin-activating enzyme]-L-cysteine + S-ubiquitinyl-[E2 ubiquitin-conjugating enzyme]-L-cysteine.</text>
        <dbReference type="EC" id="2.3.2.23"/>
    </reaction>
</comment>
<comment type="pathway">
    <text evidence="2">Protein modification; protein ubiquitination.</text>
</comment>
<comment type="subunit">
    <text evidence="1">Interacts with RNF19A, RNF19B and RNF144B. Interacts with FLT3 (tyrosine phosphorylated).</text>
</comment>
<comment type="PTM">
    <text evidence="1">ISGylated.</text>
</comment>
<comment type="similarity">
    <text evidence="2">Belongs to the ubiquitin-conjugating enzyme family.</text>
</comment>
<name>UB2L6_RAT</name>
<feature type="chain" id="PRO_0000375221" description="Ubiquitin/ISG15-conjugating enzyme E2 L6">
    <location>
        <begin position="1"/>
        <end position="153"/>
    </location>
</feature>
<feature type="domain" description="UBC core" evidence="2">
    <location>
        <begin position="2"/>
        <end position="149"/>
    </location>
</feature>
<feature type="active site" description="Glycyl thioester intermediate" evidence="2 3">
    <location>
        <position position="86"/>
    </location>
</feature>
<gene>
    <name type="primary">Ube2l6</name>
</gene>
<protein>
    <recommendedName>
        <fullName>Ubiquitin/ISG15-conjugating enzyme E2 L6</fullName>
        <ecNumber>2.3.2.23</ecNumber>
    </recommendedName>
    <alternativeName>
        <fullName>E2 ubiquitin-conjugating enzyme L6</fullName>
    </alternativeName>
    <alternativeName>
        <fullName>Ubiquitin carrier protein L6</fullName>
    </alternativeName>
    <alternativeName>
        <fullName>Ubiquitin-protein ligase L6</fullName>
    </alternativeName>
</protein>
<dbReference type="EC" id="2.3.2.23"/>
<dbReference type="EMBL" id="BC097364">
    <property type="protein sequence ID" value="AAH97364.1"/>
    <property type="molecule type" value="mRNA"/>
</dbReference>
<dbReference type="RefSeq" id="NP_001019926.1">
    <property type="nucleotide sequence ID" value="NM_001024755.1"/>
</dbReference>
<dbReference type="SMR" id="Q4V8J2"/>
<dbReference type="FunCoup" id="Q4V8J2">
    <property type="interactions" value="630"/>
</dbReference>
<dbReference type="STRING" id="10116.ENSRNOP00000039001"/>
<dbReference type="PhosphoSitePlus" id="Q4V8J2"/>
<dbReference type="jPOST" id="Q4V8J2"/>
<dbReference type="PaxDb" id="10116-ENSRNOP00000039001"/>
<dbReference type="Ensembl" id="ENSRNOT00000109055.1">
    <property type="protein sequence ID" value="ENSRNOP00000084777.1"/>
    <property type="gene ID" value="ENSRNOG00000030467.5"/>
</dbReference>
<dbReference type="GeneID" id="295704"/>
<dbReference type="KEGG" id="rno:295704"/>
<dbReference type="UCSC" id="RGD:1307960">
    <property type="organism name" value="rat"/>
</dbReference>
<dbReference type="AGR" id="RGD:1307960"/>
<dbReference type="CTD" id="9246"/>
<dbReference type="RGD" id="1307960">
    <property type="gene designation" value="Ube2l6"/>
</dbReference>
<dbReference type="eggNOG" id="KOG0422">
    <property type="taxonomic scope" value="Eukaryota"/>
</dbReference>
<dbReference type="GeneTree" id="ENSGT00940000161981"/>
<dbReference type="HOGENOM" id="CLU_030988_13_3_1"/>
<dbReference type="InParanoid" id="Q4V8J2"/>
<dbReference type="OMA" id="PPYNLRA"/>
<dbReference type="OrthoDB" id="28781at9989"/>
<dbReference type="PhylomeDB" id="Q4V8J2"/>
<dbReference type="TreeFam" id="TF313043"/>
<dbReference type="Reactome" id="R-RNO-1169408">
    <property type="pathway name" value="ISG15 antiviral mechanism"/>
</dbReference>
<dbReference type="Reactome" id="R-RNO-5656169">
    <property type="pathway name" value="Termination of translesion DNA synthesis"/>
</dbReference>
<dbReference type="Reactome" id="R-RNO-983168">
    <property type="pathway name" value="Antigen processing: Ubiquitination &amp; Proteasome degradation"/>
</dbReference>
<dbReference type="Reactome" id="R-RNO-9833482">
    <property type="pathway name" value="PKR-mediated signaling"/>
</dbReference>
<dbReference type="Reactome" id="R-RNO-9909505">
    <property type="pathway name" value="Modulation of host responses by IFN-stimulated genes"/>
</dbReference>
<dbReference type="UniPathway" id="UPA00143"/>
<dbReference type="PRO" id="PR:Q4V8J2"/>
<dbReference type="Proteomes" id="UP000002494">
    <property type="component" value="Chromosome 3"/>
</dbReference>
<dbReference type="Bgee" id="ENSRNOG00000030467">
    <property type="expression patterns" value="Expressed in duodenum and 19 other cell types or tissues"/>
</dbReference>
<dbReference type="GO" id="GO:0005634">
    <property type="term" value="C:nucleus"/>
    <property type="evidence" value="ECO:0000318"/>
    <property type="project" value="GO_Central"/>
</dbReference>
<dbReference type="GO" id="GO:0005524">
    <property type="term" value="F:ATP binding"/>
    <property type="evidence" value="ECO:0007669"/>
    <property type="project" value="UniProtKB-KW"/>
</dbReference>
<dbReference type="GO" id="GO:0042296">
    <property type="term" value="F:ISG15 transferase activity"/>
    <property type="evidence" value="ECO:0000266"/>
    <property type="project" value="RGD"/>
</dbReference>
<dbReference type="GO" id="GO:0043130">
    <property type="term" value="F:ubiquitin binding"/>
    <property type="evidence" value="ECO:0000266"/>
    <property type="project" value="RGD"/>
</dbReference>
<dbReference type="GO" id="GO:0061631">
    <property type="term" value="F:ubiquitin conjugating enzyme activity"/>
    <property type="evidence" value="ECO:0000318"/>
    <property type="project" value="GO_Central"/>
</dbReference>
<dbReference type="GO" id="GO:0019787">
    <property type="term" value="F:ubiquitin-like protein transferase activity"/>
    <property type="evidence" value="ECO:0000266"/>
    <property type="project" value="RGD"/>
</dbReference>
<dbReference type="GO" id="GO:0045087">
    <property type="term" value="P:innate immune response"/>
    <property type="evidence" value="ECO:0000266"/>
    <property type="project" value="RGD"/>
</dbReference>
<dbReference type="GO" id="GO:0032020">
    <property type="term" value="P:ISG15-protein conjugation"/>
    <property type="evidence" value="ECO:0000266"/>
    <property type="project" value="RGD"/>
</dbReference>
<dbReference type="GO" id="GO:0019941">
    <property type="term" value="P:modification-dependent protein catabolic process"/>
    <property type="evidence" value="ECO:0000266"/>
    <property type="project" value="RGD"/>
</dbReference>
<dbReference type="GO" id="GO:0000209">
    <property type="term" value="P:protein polyubiquitination"/>
    <property type="evidence" value="ECO:0000318"/>
    <property type="project" value="GO_Central"/>
</dbReference>
<dbReference type="GO" id="GO:0006511">
    <property type="term" value="P:ubiquitin-dependent protein catabolic process"/>
    <property type="evidence" value="ECO:0000318"/>
    <property type="project" value="GO_Central"/>
</dbReference>
<dbReference type="CDD" id="cd23801">
    <property type="entry name" value="UBCc_UBE2L3"/>
    <property type="match status" value="1"/>
</dbReference>
<dbReference type="FunFam" id="3.10.110.10:FF:000011">
    <property type="entry name" value="Ubiquitin-conjugating enzyme E2 L3"/>
    <property type="match status" value="1"/>
</dbReference>
<dbReference type="Gene3D" id="3.10.110.10">
    <property type="entry name" value="Ubiquitin Conjugating Enzyme"/>
    <property type="match status" value="1"/>
</dbReference>
<dbReference type="InterPro" id="IPR050113">
    <property type="entry name" value="Ub_conjugating_enzyme"/>
</dbReference>
<dbReference type="InterPro" id="IPR000608">
    <property type="entry name" value="UBQ-conjugat_E2_core"/>
</dbReference>
<dbReference type="InterPro" id="IPR023313">
    <property type="entry name" value="UBQ-conjugating_AS"/>
</dbReference>
<dbReference type="InterPro" id="IPR016135">
    <property type="entry name" value="UBQ-conjugating_enzyme/RWD"/>
</dbReference>
<dbReference type="PANTHER" id="PTHR24067">
    <property type="entry name" value="UBIQUITIN-CONJUGATING ENZYME E2"/>
    <property type="match status" value="1"/>
</dbReference>
<dbReference type="Pfam" id="PF00179">
    <property type="entry name" value="UQ_con"/>
    <property type="match status" value="1"/>
</dbReference>
<dbReference type="SMART" id="SM00212">
    <property type="entry name" value="UBCc"/>
    <property type="match status" value="1"/>
</dbReference>
<dbReference type="SUPFAM" id="SSF54495">
    <property type="entry name" value="UBC-like"/>
    <property type="match status" value="1"/>
</dbReference>
<dbReference type="PROSITE" id="PS00183">
    <property type="entry name" value="UBC_1"/>
    <property type="match status" value="1"/>
</dbReference>
<dbReference type="PROSITE" id="PS50127">
    <property type="entry name" value="UBC_2"/>
    <property type="match status" value="1"/>
</dbReference>
<sequence>MTASKRVAKELDDLSKELPPYLRHLSSDDANVLVWHMLLLPDQLPYRLKAFGLRIDFPREYPLKPPTLRFTTKIYHPNISEDGLVCLPLISTENWKPYTKAYQVLEALNILVSRPNLEEPVRLELADLLTQDPEMFRKKAEEFTLQYGVDRPS</sequence>
<keyword id="KW-0067">ATP-binding</keyword>
<keyword id="KW-0547">Nucleotide-binding</keyword>
<keyword id="KW-1185">Reference proteome</keyword>
<keyword id="KW-0808">Transferase</keyword>
<keyword id="KW-0832">Ubl conjugation</keyword>
<keyword id="KW-0833">Ubl conjugation pathway</keyword>
<organism>
    <name type="scientific">Rattus norvegicus</name>
    <name type="common">Rat</name>
    <dbReference type="NCBI Taxonomy" id="10116"/>
    <lineage>
        <taxon>Eukaryota</taxon>
        <taxon>Metazoa</taxon>
        <taxon>Chordata</taxon>
        <taxon>Craniata</taxon>
        <taxon>Vertebrata</taxon>
        <taxon>Euteleostomi</taxon>
        <taxon>Mammalia</taxon>
        <taxon>Eutheria</taxon>
        <taxon>Euarchontoglires</taxon>
        <taxon>Glires</taxon>
        <taxon>Rodentia</taxon>
        <taxon>Myomorpha</taxon>
        <taxon>Muroidea</taxon>
        <taxon>Muridae</taxon>
        <taxon>Murinae</taxon>
        <taxon>Rattus</taxon>
    </lineage>
</organism>
<proteinExistence type="evidence at transcript level"/>